<sequence length="100" mass="11142">MHLSPQEKDKLLIFSAALLAERRLSRGLKLNYPETIAFLSFQVLEGARDGKSVSQLMSEGTTWLSKSQVMEGIPEMVDEVQIEAVFPDGTKLVTIHNPIN</sequence>
<accession>A2BQW6</accession>
<reference key="1">
    <citation type="journal article" date="2007" name="PLoS Genet.">
        <title>Patterns and implications of gene gain and loss in the evolution of Prochlorococcus.</title>
        <authorList>
            <person name="Kettler G.C."/>
            <person name="Martiny A.C."/>
            <person name="Huang K."/>
            <person name="Zucker J."/>
            <person name="Coleman M.L."/>
            <person name="Rodrigue S."/>
            <person name="Chen F."/>
            <person name="Lapidus A."/>
            <person name="Ferriera S."/>
            <person name="Johnson J."/>
            <person name="Steglich C."/>
            <person name="Church G.M."/>
            <person name="Richardson P."/>
            <person name="Chisholm S.W."/>
        </authorList>
    </citation>
    <scope>NUCLEOTIDE SEQUENCE [LARGE SCALE GENOMIC DNA]</scope>
    <source>
        <strain>AS9601</strain>
    </source>
</reference>
<proteinExistence type="inferred from homology"/>
<protein>
    <recommendedName>
        <fullName evidence="1">Urease subunit gamma</fullName>
        <ecNumber evidence="1">3.5.1.5</ecNumber>
    </recommendedName>
    <alternativeName>
        <fullName evidence="1">Urea amidohydrolase subunit gamma</fullName>
    </alternativeName>
</protein>
<evidence type="ECO:0000255" key="1">
    <source>
        <dbReference type="HAMAP-Rule" id="MF_00739"/>
    </source>
</evidence>
<comment type="catalytic activity">
    <reaction evidence="1">
        <text>urea + 2 H2O + H(+) = hydrogencarbonate + 2 NH4(+)</text>
        <dbReference type="Rhea" id="RHEA:20557"/>
        <dbReference type="ChEBI" id="CHEBI:15377"/>
        <dbReference type="ChEBI" id="CHEBI:15378"/>
        <dbReference type="ChEBI" id="CHEBI:16199"/>
        <dbReference type="ChEBI" id="CHEBI:17544"/>
        <dbReference type="ChEBI" id="CHEBI:28938"/>
        <dbReference type="EC" id="3.5.1.5"/>
    </reaction>
</comment>
<comment type="pathway">
    <text evidence="1">Nitrogen metabolism; urea degradation; CO(2) and NH(3) from urea (urease route): step 1/1.</text>
</comment>
<comment type="subunit">
    <text evidence="1">Heterotrimer of UreA (gamma), UreB (beta) and UreC (alpha) subunits. Three heterotrimers associate to form the active enzyme.</text>
</comment>
<comment type="subcellular location">
    <subcellularLocation>
        <location evidence="1">Cytoplasm</location>
    </subcellularLocation>
</comment>
<comment type="similarity">
    <text evidence="1">Belongs to the urease gamma subunit family.</text>
</comment>
<keyword id="KW-0963">Cytoplasm</keyword>
<keyword id="KW-0378">Hydrolase</keyword>
<feature type="chain" id="PRO_1000046351" description="Urease subunit gamma">
    <location>
        <begin position="1"/>
        <end position="100"/>
    </location>
</feature>
<dbReference type="EC" id="3.5.1.5" evidence="1"/>
<dbReference type="EMBL" id="CP000551">
    <property type="protein sequence ID" value="ABM70177.1"/>
    <property type="molecule type" value="Genomic_DNA"/>
</dbReference>
<dbReference type="RefSeq" id="WP_011818334.1">
    <property type="nucleotide sequence ID" value="NC_008816.1"/>
</dbReference>
<dbReference type="SMR" id="A2BQW6"/>
<dbReference type="STRING" id="146891.A9601_08931"/>
<dbReference type="KEGG" id="pmb:A9601_08931"/>
<dbReference type="eggNOG" id="COG0831">
    <property type="taxonomic scope" value="Bacteria"/>
</dbReference>
<dbReference type="HOGENOM" id="CLU_145825_1_0_3"/>
<dbReference type="OrthoDB" id="9793527at2"/>
<dbReference type="UniPathway" id="UPA00258">
    <property type="reaction ID" value="UER00370"/>
</dbReference>
<dbReference type="Proteomes" id="UP000002590">
    <property type="component" value="Chromosome"/>
</dbReference>
<dbReference type="GO" id="GO:0005737">
    <property type="term" value="C:cytoplasm"/>
    <property type="evidence" value="ECO:0007669"/>
    <property type="project" value="UniProtKB-SubCell"/>
</dbReference>
<dbReference type="GO" id="GO:0016151">
    <property type="term" value="F:nickel cation binding"/>
    <property type="evidence" value="ECO:0007669"/>
    <property type="project" value="InterPro"/>
</dbReference>
<dbReference type="GO" id="GO:0009039">
    <property type="term" value="F:urease activity"/>
    <property type="evidence" value="ECO:0007669"/>
    <property type="project" value="UniProtKB-UniRule"/>
</dbReference>
<dbReference type="GO" id="GO:0043419">
    <property type="term" value="P:urea catabolic process"/>
    <property type="evidence" value="ECO:0007669"/>
    <property type="project" value="UniProtKB-UniRule"/>
</dbReference>
<dbReference type="CDD" id="cd00390">
    <property type="entry name" value="Urease_gamma"/>
    <property type="match status" value="1"/>
</dbReference>
<dbReference type="Gene3D" id="3.30.280.10">
    <property type="entry name" value="Urease, gamma-like subunit"/>
    <property type="match status" value="1"/>
</dbReference>
<dbReference type="HAMAP" id="MF_00739">
    <property type="entry name" value="Urease_gamma"/>
    <property type="match status" value="1"/>
</dbReference>
<dbReference type="InterPro" id="IPR012010">
    <property type="entry name" value="Urease_gamma"/>
</dbReference>
<dbReference type="InterPro" id="IPR002026">
    <property type="entry name" value="Urease_gamma/gamma-beta_su"/>
</dbReference>
<dbReference type="InterPro" id="IPR036463">
    <property type="entry name" value="Urease_gamma_sf"/>
</dbReference>
<dbReference type="InterPro" id="IPR050069">
    <property type="entry name" value="Urease_subunit"/>
</dbReference>
<dbReference type="NCBIfam" id="NF009712">
    <property type="entry name" value="PRK13241.1"/>
    <property type="match status" value="1"/>
</dbReference>
<dbReference type="NCBIfam" id="TIGR00193">
    <property type="entry name" value="urease_gam"/>
    <property type="match status" value="1"/>
</dbReference>
<dbReference type="PANTHER" id="PTHR33569">
    <property type="entry name" value="UREASE"/>
    <property type="match status" value="1"/>
</dbReference>
<dbReference type="PANTHER" id="PTHR33569:SF1">
    <property type="entry name" value="UREASE"/>
    <property type="match status" value="1"/>
</dbReference>
<dbReference type="Pfam" id="PF00547">
    <property type="entry name" value="Urease_gamma"/>
    <property type="match status" value="1"/>
</dbReference>
<dbReference type="PIRSF" id="PIRSF001223">
    <property type="entry name" value="Urease_gamma"/>
    <property type="match status" value="1"/>
</dbReference>
<dbReference type="SUPFAM" id="SSF54111">
    <property type="entry name" value="Urease, gamma-subunit"/>
    <property type="match status" value="1"/>
</dbReference>
<name>URE3_PROMS</name>
<organism>
    <name type="scientific">Prochlorococcus marinus (strain AS9601)</name>
    <dbReference type="NCBI Taxonomy" id="146891"/>
    <lineage>
        <taxon>Bacteria</taxon>
        <taxon>Bacillati</taxon>
        <taxon>Cyanobacteriota</taxon>
        <taxon>Cyanophyceae</taxon>
        <taxon>Synechococcales</taxon>
        <taxon>Prochlorococcaceae</taxon>
        <taxon>Prochlorococcus</taxon>
    </lineage>
</organism>
<gene>
    <name evidence="1" type="primary">ureA</name>
    <name type="ordered locus">A9601_08931</name>
</gene>